<sequence length="152" mass="17824">MKLIASNKKAYFDYEILETLEAGLALLGSEVKALRQTRVNLKDNFVKIIKGEAFLFGVHISYLDTIHAYYKPNERRERKLLLHKKQLLKWQIEASKERLSIVGLKLYFNQRNRAKIQIALVKGKRLHDKRQSLKEKALNKEILADLKHHFKG</sequence>
<gene>
    <name evidence="1" type="primary">smpB</name>
    <name type="ordered locus">HP_1444</name>
</gene>
<feature type="chain" id="PRO_0000102960" description="SsrA-binding protein">
    <location>
        <begin position="1"/>
        <end position="152"/>
    </location>
</feature>
<keyword id="KW-0963">Cytoplasm</keyword>
<keyword id="KW-1185">Reference proteome</keyword>
<keyword id="KW-0694">RNA-binding</keyword>
<keyword id="KW-0346">Stress response</keyword>
<accession>O25985</accession>
<organism>
    <name type="scientific">Helicobacter pylori (strain ATCC 700392 / 26695)</name>
    <name type="common">Campylobacter pylori</name>
    <dbReference type="NCBI Taxonomy" id="85962"/>
    <lineage>
        <taxon>Bacteria</taxon>
        <taxon>Pseudomonadati</taxon>
        <taxon>Campylobacterota</taxon>
        <taxon>Epsilonproteobacteria</taxon>
        <taxon>Campylobacterales</taxon>
        <taxon>Helicobacteraceae</taxon>
        <taxon>Helicobacter</taxon>
    </lineage>
</organism>
<proteinExistence type="evidence at transcript level"/>
<reference key="1">
    <citation type="journal article" date="1997" name="Nature">
        <title>The complete genome sequence of the gastric pathogen Helicobacter pylori.</title>
        <authorList>
            <person name="Tomb J.-F."/>
            <person name="White O."/>
            <person name="Kerlavage A.R."/>
            <person name="Clayton R.A."/>
            <person name="Sutton G.G."/>
            <person name="Fleischmann R.D."/>
            <person name="Ketchum K.A."/>
            <person name="Klenk H.-P."/>
            <person name="Gill S.R."/>
            <person name="Dougherty B.A."/>
            <person name="Nelson K.E."/>
            <person name="Quackenbush J."/>
            <person name="Zhou L."/>
            <person name="Kirkness E.F."/>
            <person name="Peterson S.N."/>
            <person name="Loftus B.J."/>
            <person name="Richardson D.L."/>
            <person name="Dodson R.J."/>
            <person name="Khalak H.G."/>
            <person name="Glodek A."/>
            <person name="McKenney K."/>
            <person name="FitzGerald L.M."/>
            <person name="Lee N."/>
            <person name="Adams M.D."/>
            <person name="Hickey E.K."/>
            <person name="Berg D.E."/>
            <person name="Gocayne J.D."/>
            <person name="Utterback T.R."/>
            <person name="Peterson J.D."/>
            <person name="Kelley J.M."/>
            <person name="Cotton M.D."/>
            <person name="Weidman J.F."/>
            <person name="Fujii C."/>
            <person name="Bowman C."/>
            <person name="Watthey L."/>
            <person name="Wallin E."/>
            <person name="Hayes W.S."/>
            <person name="Borodovsky M."/>
            <person name="Karp P.D."/>
            <person name="Smith H.O."/>
            <person name="Fraser C.M."/>
            <person name="Venter J.C."/>
        </authorList>
    </citation>
    <scope>NUCLEOTIDE SEQUENCE [LARGE SCALE GENOMIC DNA]</scope>
    <source>
        <strain>ATCC 700392 / 26695</strain>
    </source>
</reference>
<reference key="2">
    <citation type="journal article" date="2004" name="Mol. Microbiol.">
        <title>Responsiveness to acidity via metal ion regulators mediates virulence in the gastric pathogen Helicobacter pylori.</title>
        <authorList>
            <person name="Bury-Mone S."/>
            <person name="Thiberge J.M."/>
            <person name="Contreras M."/>
            <person name="Maitournam A."/>
            <person name="Labigne A."/>
            <person name="De Reuse H."/>
        </authorList>
    </citation>
    <scope>INDUCTION BY ACID STRESS</scope>
</reference>
<reference key="3">
    <citation type="journal article" date="2008" name="PLoS ONE">
        <title>Trans-translation in Helicobacter pylori: essentiality of ribosome rescue and requirement of protein tagging for stress resistance and competence.</title>
        <authorList>
            <person name="Thibonnier M."/>
            <person name="Thiberge J.M."/>
            <person name="De Reuse H."/>
        </authorList>
    </citation>
    <scope>FUNCTION</scope>
    <scope>DISRUPTION PHENOTYPE</scope>
    <source>
        <strain>ATCC 700392 / 26695</strain>
        <strain>N6</strain>
        <strain>X47-2AL</strain>
    </source>
</reference>
<dbReference type="EMBL" id="AE000511">
    <property type="protein sequence ID" value="AAD08482.1"/>
    <property type="molecule type" value="Genomic_DNA"/>
</dbReference>
<dbReference type="PIR" id="D64700">
    <property type="entry name" value="D64700"/>
</dbReference>
<dbReference type="RefSeq" id="NP_208235.1">
    <property type="nucleotide sequence ID" value="NC_000915.1"/>
</dbReference>
<dbReference type="RefSeq" id="WP_000766480.1">
    <property type="nucleotide sequence ID" value="NC_018939.1"/>
</dbReference>
<dbReference type="SMR" id="O25985"/>
<dbReference type="DIP" id="DIP-3736N"/>
<dbReference type="FunCoup" id="O25985">
    <property type="interactions" value="313"/>
</dbReference>
<dbReference type="IntAct" id="O25985">
    <property type="interactions" value="10"/>
</dbReference>
<dbReference type="MINT" id="O25985"/>
<dbReference type="STRING" id="85962.HP_1444"/>
<dbReference type="PaxDb" id="85962-C694_07480"/>
<dbReference type="EnsemblBacteria" id="AAD08482">
    <property type="protein sequence ID" value="AAD08482"/>
    <property type="gene ID" value="HP_1444"/>
</dbReference>
<dbReference type="KEGG" id="heo:C694_07480"/>
<dbReference type="KEGG" id="hpy:HP_1444"/>
<dbReference type="PATRIC" id="fig|85962.47.peg.1553"/>
<dbReference type="eggNOG" id="COG0691">
    <property type="taxonomic scope" value="Bacteria"/>
</dbReference>
<dbReference type="InParanoid" id="O25985"/>
<dbReference type="OrthoDB" id="9805462at2"/>
<dbReference type="PhylomeDB" id="O25985"/>
<dbReference type="Proteomes" id="UP000000429">
    <property type="component" value="Chromosome"/>
</dbReference>
<dbReference type="GO" id="GO:0005829">
    <property type="term" value="C:cytosol"/>
    <property type="evidence" value="ECO:0000318"/>
    <property type="project" value="GO_Central"/>
</dbReference>
<dbReference type="GO" id="GO:0003723">
    <property type="term" value="F:RNA binding"/>
    <property type="evidence" value="ECO:0000318"/>
    <property type="project" value="GO_Central"/>
</dbReference>
<dbReference type="GO" id="GO:0070929">
    <property type="term" value="P:trans-translation"/>
    <property type="evidence" value="ECO:0007669"/>
    <property type="project" value="UniProtKB-UniRule"/>
</dbReference>
<dbReference type="CDD" id="cd09294">
    <property type="entry name" value="SmpB"/>
    <property type="match status" value="1"/>
</dbReference>
<dbReference type="Gene3D" id="2.40.280.10">
    <property type="match status" value="1"/>
</dbReference>
<dbReference type="HAMAP" id="MF_00023">
    <property type="entry name" value="SmpB"/>
    <property type="match status" value="1"/>
</dbReference>
<dbReference type="InterPro" id="IPR023620">
    <property type="entry name" value="SmpB"/>
</dbReference>
<dbReference type="InterPro" id="IPR000037">
    <property type="entry name" value="SsrA-bd_prot"/>
</dbReference>
<dbReference type="InterPro" id="IPR020081">
    <property type="entry name" value="SsrA-bd_prot_CS"/>
</dbReference>
<dbReference type="NCBIfam" id="NF003843">
    <property type="entry name" value="PRK05422.1"/>
    <property type="match status" value="1"/>
</dbReference>
<dbReference type="NCBIfam" id="TIGR00086">
    <property type="entry name" value="smpB"/>
    <property type="match status" value="1"/>
</dbReference>
<dbReference type="PANTHER" id="PTHR30308:SF2">
    <property type="entry name" value="SSRA-BINDING PROTEIN"/>
    <property type="match status" value="1"/>
</dbReference>
<dbReference type="PANTHER" id="PTHR30308">
    <property type="entry name" value="TMRNA-BINDING COMPONENT OF TRANS-TRANSLATION TAGGING COMPLEX"/>
    <property type="match status" value="1"/>
</dbReference>
<dbReference type="Pfam" id="PF01668">
    <property type="entry name" value="SmpB"/>
    <property type="match status" value="1"/>
</dbReference>
<dbReference type="SUPFAM" id="SSF74982">
    <property type="entry name" value="Small protein B (SmpB)"/>
    <property type="match status" value="1"/>
</dbReference>
<dbReference type="PROSITE" id="PS01317">
    <property type="entry name" value="SSRP"/>
    <property type="match status" value="1"/>
</dbReference>
<protein>
    <recommendedName>
        <fullName evidence="1">SsrA-binding protein</fullName>
    </recommendedName>
    <alternativeName>
        <fullName evidence="1">Small protein B</fullName>
    </alternativeName>
</protein>
<name>SSRP_HELPY</name>
<evidence type="ECO:0000255" key="1">
    <source>
        <dbReference type="HAMAP-Rule" id="MF_00023"/>
    </source>
</evidence>
<evidence type="ECO:0000269" key="2">
    <source>
    </source>
</evidence>
<evidence type="ECO:0000269" key="3">
    <source>
    </source>
</evidence>
<comment type="function">
    <text evidence="1 3">Required for rescue of stalled ribosomes mediated by trans-translation. Binds to transfer-messenger RNA (tmRNA), required for stable association of tmRNA with ribosomes (Probable). tmRNA and SmpB together mimic tRNA shape, replacing the anticodon stem-loop with SmpB. tmRNA is encoded by the ssrA gene; the 2 termini fold to resemble tRNA(Ala) and it encodes a 'tag peptide', a short internal open reading frame. During trans-translation Ala-aminoacylated tmRNA acts like a tRNA, entering the A-site of stalled ribosomes, displacing the stalled mRNA. The ribosome then switches to translate the ORF on the tmRNA; the nascent peptide is terminated with the 'tag peptide' encoded by the tmRNA and targeted for degradation. The ribosome is freed to recommence translation, which seems to be the essential function of trans-translation (PubMed:19043582).</text>
</comment>
<comment type="subcellular location">
    <subcellularLocation>
        <location evidence="1">Cytoplasm</location>
    </subcellularLocation>
    <text evidence="1">The tmRNA-SmpB complex associates with stalled 70S ribosomes.</text>
</comment>
<comment type="induction">
    <text evidence="2">By growth at pH 5.0 in exponential phase.</text>
</comment>
<comment type="disruption phenotype">
    <text evidence="3">Essential, it cannot be deleted. Depletion experiments show loss of growth after 12 hours, cells remain viable for a further 12 hours before they can no longer be rescued by induction of smpB. Similarly, the gene for tmRNA (ssrA) cannot be deleted; mutations in the tmRNA show that it is the ribosome rescue function and not protein tagging and subsequent degradation that is essential for viability. Mutant tmRNAs that affect protein tagging are however more susceptible to antibiotic stress and less naturally competent for DNA transformation.</text>
</comment>
<comment type="similarity">
    <text evidence="1">Belongs to the SmpB family.</text>
</comment>